<comment type="function">
    <text evidence="1">Catalyzes the specific phosphorylation of the 3-hydroxyl group of shikimic acid using ATP as a cosubstrate.</text>
</comment>
<comment type="catalytic activity">
    <reaction evidence="1">
        <text>shikimate + ATP = 3-phosphoshikimate + ADP + H(+)</text>
        <dbReference type="Rhea" id="RHEA:13121"/>
        <dbReference type="ChEBI" id="CHEBI:15378"/>
        <dbReference type="ChEBI" id="CHEBI:30616"/>
        <dbReference type="ChEBI" id="CHEBI:36208"/>
        <dbReference type="ChEBI" id="CHEBI:145989"/>
        <dbReference type="ChEBI" id="CHEBI:456216"/>
        <dbReference type="EC" id="2.7.1.71"/>
    </reaction>
</comment>
<comment type="cofactor">
    <cofactor evidence="1">
        <name>Mg(2+)</name>
        <dbReference type="ChEBI" id="CHEBI:18420"/>
    </cofactor>
    <text evidence="1">Binds 1 Mg(2+) ion per subunit.</text>
</comment>
<comment type="pathway">
    <text evidence="1">Metabolic intermediate biosynthesis; chorismate biosynthesis; chorismate from D-erythrose 4-phosphate and phosphoenolpyruvate: step 5/7.</text>
</comment>
<comment type="subunit">
    <text evidence="1">Monomer.</text>
</comment>
<comment type="subcellular location">
    <subcellularLocation>
        <location evidence="1">Cytoplasm</location>
    </subcellularLocation>
</comment>
<comment type="similarity">
    <text evidence="1">Belongs to the shikimate kinase family.</text>
</comment>
<comment type="sequence caution" evidence="2">
    <conflict type="erroneous initiation">
        <sequence resource="EMBL-CDS" id="AAW54502"/>
    </conflict>
</comment>
<accession>Q5HP11</accession>
<dbReference type="EC" id="2.7.1.71" evidence="1"/>
<dbReference type="EMBL" id="CP000029">
    <property type="protein sequence ID" value="AAW54502.1"/>
    <property type="status" value="ALT_INIT"/>
    <property type="molecule type" value="Genomic_DNA"/>
</dbReference>
<dbReference type="RefSeq" id="WP_002440040.1">
    <property type="nucleotide sequence ID" value="NC_002976.3"/>
</dbReference>
<dbReference type="SMR" id="Q5HP11"/>
<dbReference type="STRING" id="176279.SERP1103"/>
<dbReference type="KEGG" id="ser:SERP1103"/>
<dbReference type="eggNOG" id="COG0703">
    <property type="taxonomic scope" value="Bacteria"/>
</dbReference>
<dbReference type="HOGENOM" id="CLU_057607_4_3_9"/>
<dbReference type="UniPathway" id="UPA00053">
    <property type="reaction ID" value="UER00088"/>
</dbReference>
<dbReference type="Proteomes" id="UP000000531">
    <property type="component" value="Chromosome"/>
</dbReference>
<dbReference type="GO" id="GO:0005829">
    <property type="term" value="C:cytosol"/>
    <property type="evidence" value="ECO:0007669"/>
    <property type="project" value="TreeGrafter"/>
</dbReference>
<dbReference type="GO" id="GO:0005524">
    <property type="term" value="F:ATP binding"/>
    <property type="evidence" value="ECO:0007669"/>
    <property type="project" value="UniProtKB-UniRule"/>
</dbReference>
<dbReference type="GO" id="GO:0000287">
    <property type="term" value="F:magnesium ion binding"/>
    <property type="evidence" value="ECO:0007669"/>
    <property type="project" value="UniProtKB-UniRule"/>
</dbReference>
<dbReference type="GO" id="GO:0004765">
    <property type="term" value="F:shikimate kinase activity"/>
    <property type="evidence" value="ECO:0007669"/>
    <property type="project" value="UniProtKB-UniRule"/>
</dbReference>
<dbReference type="GO" id="GO:0008652">
    <property type="term" value="P:amino acid biosynthetic process"/>
    <property type="evidence" value="ECO:0007669"/>
    <property type="project" value="UniProtKB-KW"/>
</dbReference>
<dbReference type="GO" id="GO:0009073">
    <property type="term" value="P:aromatic amino acid family biosynthetic process"/>
    <property type="evidence" value="ECO:0007669"/>
    <property type="project" value="UniProtKB-KW"/>
</dbReference>
<dbReference type="GO" id="GO:0009423">
    <property type="term" value="P:chorismate biosynthetic process"/>
    <property type="evidence" value="ECO:0007669"/>
    <property type="project" value="UniProtKB-UniRule"/>
</dbReference>
<dbReference type="CDD" id="cd00464">
    <property type="entry name" value="SK"/>
    <property type="match status" value="1"/>
</dbReference>
<dbReference type="Gene3D" id="3.40.50.300">
    <property type="entry name" value="P-loop containing nucleotide triphosphate hydrolases"/>
    <property type="match status" value="1"/>
</dbReference>
<dbReference type="HAMAP" id="MF_00109">
    <property type="entry name" value="Shikimate_kinase"/>
    <property type="match status" value="1"/>
</dbReference>
<dbReference type="InterPro" id="IPR027417">
    <property type="entry name" value="P-loop_NTPase"/>
</dbReference>
<dbReference type="InterPro" id="IPR031322">
    <property type="entry name" value="Shikimate/glucono_kinase"/>
</dbReference>
<dbReference type="InterPro" id="IPR000623">
    <property type="entry name" value="Shikimate_kinase/TSH1"/>
</dbReference>
<dbReference type="InterPro" id="IPR023000">
    <property type="entry name" value="Shikimate_kinase_CS"/>
</dbReference>
<dbReference type="PANTHER" id="PTHR21087">
    <property type="entry name" value="SHIKIMATE KINASE"/>
    <property type="match status" value="1"/>
</dbReference>
<dbReference type="PANTHER" id="PTHR21087:SF16">
    <property type="entry name" value="SHIKIMATE KINASE 1, CHLOROPLASTIC"/>
    <property type="match status" value="1"/>
</dbReference>
<dbReference type="Pfam" id="PF01202">
    <property type="entry name" value="SKI"/>
    <property type="match status" value="1"/>
</dbReference>
<dbReference type="PRINTS" id="PR01100">
    <property type="entry name" value="SHIKIMTKNASE"/>
</dbReference>
<dbReference type="SUPFAM" id="SSF52540">
    <property type="entry name" value="P-loop containing nucleoside triphosphate hydrolases"/>
    <property type="match status" value="1"/>
</dbReference>
<dbReference type="PROSITE" id="PS01128">
    <property type="entry name" value="SHIKIMATE_KINASE"/>
    <property type="match status" value="1"/>
</dbReference>
<proteinExistence type="inferred from homology"/>
<sequence>MKSIQVPIILVGFMGTGKTTVGKYLSDLYNLSYVDLDNFIEVNECKSIPNIFNDIGEKGFRSLETRYLKSCLNTFDIISTGGGIIEDTNSLKLLKNQKHVVWLDCDIEIIFKRVKNDSHRPNAKSKNLNQLDALYSSRLSRYNEIAFMKVDSAQSVSEICTLIKTKLLSD</sequence>
<evidence type="ECO:0000255" key="1">
    <source>
        <dbReference type="HAMAP-Rule" id="MF_00109"/>
    </source>
</evidence>
<evidence type="ECO:0000305" key="2"/>
<feature type="chain" id="PRO_0000192417" description="Shikimate kinase">
    <location>
        <begin position="1"/>
        <end position="170"/>
    </location>
</feature>
<feature type="binding site" evidence="1">
    <location>
        <begin position="15"/>
        <end position="20"/>
    </location>
    <ligand>
        <name>ATP</name>
        <dbReference type="ChEBI" id="CHEBI:30616"/>
    </ligand>
</feature>
<feature type="binding site" evidence="1">
    <location>
        <position position="19"/>
    </location>
    <ligand>
        <name>Mg(2+)</name>
        <dbReference type="ChEBI" id="CHEBI:18420"/>
    </ligand>
</feature>
<feature type="binding site" evidence="1">
    <location>
        <position position="37"/>
    </location>
    <ligand>
        <name>substrate</name>
    </ligand>
</feature>
<feature type="binding site" evidence="1">
    <location>
        <position position="61"/>
    </location>
    <ligand>
        <name>substrate</name>
    </ligand>
</feature>
<feature type="binding site" evidence="1">
    <location>
        <position position="82"/>
    </location>
    <ligand>
        <name>substrate</name>
    </ligand>
</feature>
<feature type="binding site" evidence="1">
    <location>
        <position position="120"/>
    </location>
    <ligand>
        <name>ATP</name>
        <dbReference type="ChEBI" id="CHEBI:30616"/>
    </ligand>
</feature>
<feature type="binding site" evidence="1">
    <location>
        <position position="138"/>
    </location>
    <ligand>
        <name>substrate</name>
    </ligand>
</feature>
<feature type="binding site" evidence="1">
    <location>
        <position position="154"/>
    </location>
    <ligand>
        <name>ATP</name>
        <dbReference type="ChEBI" id="CHEBI:30616"/>
    </ligand>
</feature>
<name>AROK_STAEQ</name>
<gene>
    <name evidence="1" type="primary">aroK</name>
    <name type="ordered locus">SERP1103</name>
</gene>
<keyword id="KW-0028">Amino-acid biosynthesis</keyword>
<keyword id="KW-0057">Aromatic amino acid biosynthesis</keyword>
<keyword id="KW-0067">ATP-binding</keyword>
<keyword id="KW-0963">Cytoplasm</keyword>
<keyword id="KW-0418">Kinase</keyword>
<keyword id="KW-0460">Magnesium</keyword>
<keyword id="KW-0479">Metal-binding</keyword>
<keyword id="KW-0547">Nucleotide-binding</keyword>
<keyword id="KW-1185">Reference proteome</keyword>
<keyword id="KW-0808">Transferase</keyword>
<organism>
    <name type="scientific">Staphylococcus epidermidis (strain ATCC 35984 / DSM 28319 / BCRC 17069 / CCUG 31568 / BM 3577 / RP62A)</name>
    <dbReference type="NCBI Taxonomy" id="176279"/>
    <lineage>
        <taxon>Bacteria</taxon>
        <taxon>Bacillati</taxon>
        <taxon>Bacillota</taxon>
        <taxon>Bacilli</taxon>
        <taxon>Bacillales</taxon>
        <taxon>Staphylococcaceae</taxon>
        <taxon>Staphylococcus</taxon>
    </lineage>
</organism>
<reference key="1">
    <citation type="journal article" date="2005" name="J. Bacteriol.">
        <title>Insights on evolution of virulence and resistance from the complete genome analysis of an early methicillin-resistant Staphylococcus aureus strain and a biofilm-producing methicillin-resistant Staphylococcus epidermidis strain.</title>
        <authorList>
            <person name="Gill S.R."/>
            <person name="Fouts D.E."/>
            <person name="Archer G.L."/>
            <person name="Mongodin E.F."/>
            <person name="DeBoy R.T."/>
            <person name="Ravel J."/>
            <person name="Paulsen I.T."/>
            <person name="Kolonay J.F."/>
            <person name="Brinkac L.M."/>
            <person name="Beanan M.J."/>
            <person name="Dodson R.J."/>
            <person name="Daugherty S.C."/>
            <person name="Madupu R."/>
            <person name="Angiuoli S.V."/>
            <person name="Durkin A.S."/>
            <person name="Haft D.H."/>
            <person name="Vamathevan J.J."/>
            <person name="Khouri H."/>
            <person name="Utterback T.R."/>
            <person name="Lee C."/>
            <person name="Dimitrov G."/>
            <person name="Jiang L."/>
            <person name="Qin H."/>
            <person name="Weidman J."/>
            <person name="Tran K."/>
            <person name="Kang K.H."/>
            <person name="Hance I.R."/>
            <person name="Nelson K.E."/>
            <person name="Fraser C.M."/>
        </authorList>
    </citation>
    <scope>NUCLEOTIDE SEQUENCE [LARGE SCALE GENOMIC DNA]</scope>
    <source>
        <strain>ATCC 35984 / DSM 28319 / BCRC 17069 / CCUG 31568 / BM 3577 / RP62A</strain>
    </source>
</reference>
<protein>
    <recommendedName>
        <fullName evidence="1">Shikimate kinase</fullName>
        <shortName evidence="1">SK</shortName>
        <ecNumber evidence="1">2.7.1.71</ecNumber>
    </recommendedName>
</protein>